<dbReference type="EMBL" id="AE003852">
    <property type="protein sequence ID" value="AAF93732.1"/>
    <property type="molecule type" value="Genomic_DNA"/>
</dbReference>
<dbReference type="PIR" id="D82307">
    <property type="entry name" value="D82307"/>
</dbReference>
<dbReference type="RefSeq" id="NP_230215.1">
    <property type="nucleotide sequence ID" value="NC_002505.1"/>
</dbReference>
<dbReference type="RefSeq" id="WP_000065250.1">
    <property type="nucleotide sequence ID" value="NZ_LT906614.1"/>
</dbReference>
<dbReference type="SMR" id="Q9KUF7"/>
<dbReference type="STRING" id="243277.VC_0564"/>
<dbReference type="DNASU" id="2615241"/>
<dbReference type="EnsemblBacteria" id="AAF93732">
    <property type="protein sequence ID" value="AAF93732"/>
    <property type="gene ID" value="VC_0564"/>
</dbReference>
<dbReference type="GeneID" id="94014655"/>
<dbReference type="KEGG" id="vch:VC_0564"/>
<dbReference type="PATRIC" id="fig|243277.26.peg.539"/>
<dbReference type="eggNOG" id="COG0335">
    <property type="taxonomic scope" value="Bacteria"/>
</dbReference>
<dbReference type="HOGENOM" id="CLU_103507_2_1_6"/>
<dbReference type="Proteomes" id="UP000000584">
    <property type="component" value="Chromosome 1"/>
</dbReference>
<dbReference type="GO" id="GO:0022625">
    <property type="term" value="C:cytosolic large ribosomal subunit"/>
    <property type="evidence" value="ECO:0000318"/>
    <property type="project" value="GO_Central"/>
</dbReference>
<dbReference type="GO" id="GO:0003735">
    <property type="term" value="F:structural constituent of ribosome"/>
    <property type="evidence" value="ECO:0000318"/>
    <property type="project" value="GO_Central"/>
</dbReference>
<dbReference type="GO" id="GO:0006412">
    <property type="term" value="P:translation"/>
    <property type="evidence" value="ECO:0007669"/>
    <property type="project" value="UniProtKB-UniRule"/>
</dbReference>
<dbReference type="FunFam" id="2.30.30.790:FF:000001">
    <property type="entry name" value="50S ribosomal protein L19"/>
    <property type="match status" value="1"/>
</dbReference>
<dbReference type="Gene3D" id="2.30.30.790">
    <property type="match status" value="1"/>
</dbReference>
<dbReference type="HAMAP" id="MF_00402">
    <property type="entry name" value="Ribosomal_bL19"/>
    <property type="match status" value="1"/>
</dbReference>
<dbReference type="InterPro" id="IPR001857">
    <property type="entry name" value="Ribosomal_bL19"/>
</dbReference>
<dbReference type="InterPro" id="IPR018257">
    <property type="entry name" value="Ribosomal_bL19_CS"/>
</dbReference>
<dbReference type="InterPro" id="IPR038657">
    <property type="entry name" value="Ribosomal_bL19_sf"/>
</dbReference>
<dbReference type="InterPro" id="IPR008991">
    <property type="entry name" value="Translation_prot_SH3-like_sf"/>
</dbReference>
<dbReference type="NCBIfam" id="TIGR01024">
    <property type="entry name" value="rplS_bact"/>
    <property type="match status" value="1"/>
</dbReference>
<dbReference type="PANTHER" id="PTHR15680:SF9">
    <property type="entry name" value="LARGE RIBOSOMAL SUBUNIT PROTEIN BL19M"/>
    <property type="match status" value="1"/>
</dbReference>
<dbReference type="PANTHER" id="PTHR15680">
    <property type="entry name" value="RIBOSOMAL PROTEIN L19"/>
    <property type="match status" value="1"/>
</dbReference>
<dbReference type="Pfam" id="PF01245">
    <property type="entry name" value="Ribosomal_L19"/>
    <property type="match status" value="1"/>
</dbReference>
<dbReference type="PIRSF" id="PIRSF002191">
    <property type="entry name" value="Ribosomal_L19"/>
    <property type="match status" value="1"/>
</dbReference>
<dbReference type="PRINTS" id="PR00061">
    <property type="entry name" value="RIBOSOMALL19"/>
</dbReference>
<dbReference type="SUPFAM" id="SSF50104">
    <property type="entry name" value="Translation proteins SH3-like domain"/>
    <property type="match status" value="1"/>
</dbReference>
<dbReference type="PROSITE" id="PS01015">
    <property type="entry name" value="RIBOSOMAL_L19"/>
    <property type="match status" value="1"/>
</dbReference>
<evidence type="ECO:0000255" key="1">
    <source>
        <dbReference type="HAMAP-Rule" id="MF_00402"/>
    </source>
</evidence>
<evidence type="ECO:0000305" key="2"/>
<accession>Q9KUF7</accession>
<feature type="initiator methionine" description="Removed">
    <location>
        <position position="1"/>
    </location>
</feature>
<feature type="chain" id="PRO_0000163565" description="Large ribosomal subunit protein bL19">
    <location>
        <begin position="2"/>
        <end position="117"/>
    </location>
</feature>
<proteinExistence type="inferred from homology"/>
<protein>
    <recommendedName>
        <fullName evidence="1">Large ribosomal subunit protein bL19</fullName>
    </recommendedName>
    <alternativeName>
        <fullName evidence="2">50S ribosomal protein L19</fullName>
    </alternativeName>
</protein>
<keyword id="KW-1185">Reference proteome</keyword>
<keyword id="KW-0687">Ribonucleoprotein</keyword>
<keyword id="KW-0689">Ribosomal protein</keyword>
<comment type="function">
    <text evidence="1">This protein is located at the 30S-50S ribosomal subunit interface and may play a role in the structure and function of the aminoacyl-tRNA binding site.</text>
</comment>
<comment type="similarity">
    <text evidence="1">Belongs to the bacterial ribosomal protein bL19 family.</text>
</comment>
<gene>
    <name evidence="1" type="primary">rplS</name>
    <name type="ordered locus">VC_0564</name>
</gene>
<name>RL19_VIBCH</name>
<sequence>MSNIIKALEQEQMKQDLPQFAPGDTVVVQVKVKEGDRERLQAFEGIVIAIRNRGLHSAFTVRKISNGEGVERTFQTHSPVVDSIEVKRRGAVRRAKLYYLRDLSGKAARIKEKLAKK</sequence>
<reference key="1">
    <citation type="journal article" date="2000" name="Nature">
        <title>DNA sequence of both chromosomes of the cholera pathogen Vibrio cholerae.</title>
        <authorList>
            <person name="Heidelberg J.F."/>
            <person name="Eisen J.A."/>
            <person name="Nelson W.C."/>
            <person name="Clayton R.A."/>
            <person name="Gwinn M.L."/>
            <person name="Dodson R.J."/>
            <person name="Haft D.H."/>
            <person name="Hickey E.K."/>
            <person name="Peterson J.D."/>
            <person name="Umayam L.A."/>
            <person name="Gill S.R."/>
            <person name="Nelson K.E."/>
            <person name="Read T.D."/>
            <person name="Tettelin H."/>
            <person name="Richardson D.L."/>
            <person name="Ermolaeva M.D."/>
            <person name="Vamathevan J.J."/>
            <person name="Bass S."/>
            <person name="Qin H."/>
            <person name="Dragoi I."/>
            <person name="Sellers P."/>
            <person name="McDonald L.A."/>
            <person name="Utterback T.R."/>
            <person name="Fleischmann R.D."/>
            <person name="Nierman W.C."/>
            <person name="White O."/>
            <person name="Salzberg S.L."/>
            <person name="Smith H.O."/>
            <person name="Colwell R.R."/>
            <person name="Mekalanos J.J."/>
            <person name="Venter J.C."/>
            <person name="Fraser C.M."/>
        </authorList>
    </citation>
    <scope>NUCLEOTIDE SEQUENCE [LARGE SCALE GENOMIC DNA]</scope>
    <source>
        <strain>ATCC 39315 / El Tor Inaba N16961</strain>
    </source>
</reference>
<organism>
    <name type="scientific">Vibrio cholerae serotype O1 (strain ATCC 39315 / El Tor Inaba N16961)</name>
    <dbReference type="NCBI Taxonomy" id="243277"/>
    <lineage>
        <taxon>Bacteria</taxon>
        <taxon>Pseudomonadati</taxon>
        <taxon>Pseudomonadota</taxon>
        <taxon>Gammaproteobacteria</taxon>
        <taxon>Vibrionales</taxon>
        <taxon>Vibrionaceae</taxon>
        <taxon>Vibrio</taxon>
    </lineage>
</organism>